<feature type="chain" id="PRO_1000164948" description="CTP synthase">
    <location>
        <begin position="1"/>
        <end position="542"/>
    </location>
</feature>
<feature type="domain" description="Glutamine amidotransferase type-1" evidence="1">
    <location>
        <begin position="291"/>
        <end position="541"/>
    </location>
</feature>
<feature type="region of interest" description="Amidoligase domain" evidence="1">
    <location>
        <begin position="1"/>
        <end position="265"/>
    </location>
</feature>
<feature type="active site" description="Nucleophile; for glutamine hydrolysis" evidence="1">
    <location>
        <position position="380"/>
    </location>
</feature>
<feature type="active site" evidence="1">
    <location>
        <position position="514"/>
    </location>
</feature>
<feature type="active site" evidence="1">
    <location>
        <position position="516"/>
    </location>
</feature>
<feature type="binding site" evidence="1">
    <location>
        <position position="13"/>
    </location>
    <ligand>
        <name>CTP</name>
        <dbReference type="ChEBI" id="CHEBI:37563"/>
        <note>allosteric inhibitor</note>
    </ligand>
</feature>
<feature type="binding site" evidence="1">
    <location>
        <position position="13"/>
    </location>
    <ligand>
        <name>UTP</name>
        <dbReference type="ChEBI" id="CHEBI:46398"/>
    </ligand>
</feature>
<feature type="binding site" evidence="1">
    <location>
        <begin position="14"/>
        <end position="19"/>
    </location>
    <ligand>
        <name>ATP</name>
        <dbReference type="ChEBI" id="CHEBI:30616"/>
    </ligand>
</feature>
<feature type="binding site" evidence="1">
    <location>
        <position position="71"/>
    </location>
    <ligand>
        <name>ATP</name>
        <dbReference type="ChEBI" id="CHEBI:30616"/>
    </ligand>
</feature>
<feature type="binding site" evidence="1">
    <location>
        <position position="71"/>
    </location>
    <ligand>
        <name>Mg(2+)</name>
        <dbReference type="ChEBI" id="CHEBI:18420"/>
    </ligand>
</feature>
<feature type="binding site" evidence="1">
    <location>
        <position position="139"/>
    </location>
    <ligand>
        <name>Mg(2+)</name>
        <dbReference type="ChEBI" id="CHEBI:18420"/>
    </ligand>
</feature>
<feature type="binding site" evidence="1">
    <location>
        <begin position="146"/>
        <end position="148"/>
    </location>
    <ligand>
        <name>CTP</name>
        <dbReference type="ChEBI" id="CHEBI:37563"/>
        <note>allosteric inhibitor</note>
    </ligand>
</feature>
<feature type="binding site" evidence="1">
    <location>
        <begin position="186"/>
        <end position="191"/>
    </location>
    <ligand>
        <name>CTP</name>
        <dbReference type="ChEBI" id="CHEBI:37563"/>
        <note>allosteric inhibitor</note>
    </ligand>
</feature>
<feature type="binding site" evidence="1">
    <location>
        <begin position="186"/>
        <end position="191"/>
    </location>
    <ligand>
        <name>UTP</name>
        <dbReference type="ChEBI" id="CHEBI:46398"/>
    </ligand>
</feature>
<feature type="binding site" evidence="1">
    <location>
        <position position="222"/>
    </location>
    <ligand>
        <name>CTP</name>
        <dbReference type="ChEBI" id="CHEBI:37563"/>
        <note>allosteric inhibitor</note>
    </ligand>
</feature>
<feature type="binding site" evidence="1">
    <location>
        <position position="222"/>
    </location>
    <ligand>
        <name>UTP</name>
        <dbReference type="ChEBI" id="CHEBI:46398"/>
    </ligand>
</feature>
<feature type="binding site" evidence="1">
    <location>
        <begin position="238"/>
        <end position="240"/>
    </location>
    <ligand>
        <name>ATP</name>
        <dbReference type="ChEBI" id="CHEBI:30616"/>
    </ligand>
</feature>
<feature type="binding site" evidence="1">
    <location>
        <position position="353"/>
    </location>
    <ligand>
        <name>L-glutamine</name>
        <dbReference type="ChEBI" id="CHEBI:58359"/>
    </ligand>
</feature>
<feature type="binding site" evidence="1">
    <location>
        <begin position="381"/>
        <end position="384"/>
    </location>
    <ligand>
        <name>L-glutamine</name>
        <dbReference type="ChEBI" id="CHEBI:58359"/>
    </ligand>
</feature>
<feature type="binding site" evidence="1">
    <location>
        <position position="404"/>
    </location>
    <ligand>
        <name>L-glutamine</name>
        <dbReference type="ChEBI" id="CHEBI:58359"/>
    </ligand>
</feature>
<feature type="binding site" evidence="1">
    <location>
        <position position="469"/>
    </location>
    <ligand>
        <name>L-glutamine</name>
        <dbReference type="ChEBI" id="CHEBI:58359"/>
    </ligand>
</feature>
<sequence length="542" mass="60005">MTRYVFITGGVVSSLGKGLASAALAALLQARGYRVRLRKLDPYLNVDPGTMSPTQHGEVFVTDDGAETDLDLGHYERFTGLPASRADNVTTGRIYLDIITKERRGDYLGATIQVIPHVTNAIKAFVLDGNDDYDFVLVEIGGTVGDIEGLPFFEAIRQIGQERPRGSVCYLHLTLLPYIPSAGELKTKPTQHSVKELRSIGIQPDILLCRCDRPIPQDERRKLGLFCNVRESAVIEARDVDTIYAVPLSYREAGLDREILAHFQMEPETEPKLDRWQNILERVRNPEGEVTIAIVGKYTGLKDAYKSLTEALTHGGIANNVRVNLEWIEAEVFEREDPAPFLEGLHGILVPGGFGQRGAEGKIRAARYARERNIPYFGICFGMQMAVIEAARSLAGIEGANSTEFGATAEPVVGLLTEWMRGNELERRAAESDLGGTMRLGAYKATLGADTKIAQMYGGTEISERHRHRYEVNMAYRACLEAKGLRFSGTSPDGLLPETVEHEGHPWFIGVQFHPELKSRPFEPHPLFKGFIAAAIDQSRLV</sequence>
<organism>
    <name type="scientific">Methylorubrum extorquens (strain CM4 / NCIMB 13688)</name>
    <name type="common">Methylobacterium extorquens</name>
    <dbReference type="NCBI Taxonomy" id="440085"/>
    <lineage>
        <taxon>Bacteria</taxon>
        <taxon>Pseudomonadati</taxon>
        <taxon>Pseudomonadota</taxon>
        <taxon>Alphaproteobacteria</taxon>
        <taxon>Hyphomicrobiales</taxon>
        <taxon>Methylobacteriaceae</taxon>
        <taxon>Methylorubrum</taxon>
    </lineage>
</organism>
<gene>
    <name evidence="1" type="primary">pyrG</name>
    <name type="ordered locus">Mchl_5124</name>
</gene>
<evidence type="ECO:0000255" key="1">
    <source>
        <dbReference type="HAMAP-Rule" id="MF_01227"/>
    </source>
</evidence>
<protein>
    <recommendedName>
        <fullName evidence="1">CTP synthase</fullName>
        <ecNumber evidence="1">6.3.4.2</ecNumber>
    </recommendedName>
    <alternativeName>
        <fullName evidence="1">Cytidine 5'-triphosphate synthase</fullName>
    </alternativeName>
    <alternativeName>
        <fullName evidence="1">Cytidine triphosphate synthetase</fullName>
        <shortName evidence="1">CTP synthetase</shortName>
        <shortName evidence="1">CTPS</shortName>
    </alternativeName>
    <alternativeName>
        <fullName evidence="1">UTP--ammonia ligase</fullName>
    </alternativeName>
</protein>
<keyword id="KW-0067">ATP-binding</keyword>
<keyword id="KW-0315">Glutamine amidotransferase</keyword>
<keyword id="KW-0436">Ligase</keyword>
<keyword id="KW-0460">Magnesium</keyword>
<keyword id="KW-0479">Metal-binding</keyword>
<keyword id="KW-0547">Nucleotide-binding</keyword>
<keyword id="KW-0665">Pyrimidine biosynthesis</keyword>
<proteinExistence type="inferred from homology"/>
<reference key="1">
    <citation type="submission" date="2008-12" db="EMBL/GenBank/DDBJ databases">
        <title>Complete sequence of chromosome of Methylobacterium chloromethanicum CM4.</title>
        <authorList>
            <consortium name="US DOE Joint Genome Institute"/>
            <person name="Lucas S."/>
            <person name="Copeland A."/>
            <person name="Lapidus A."/>
            <person name="Glavina del Rio T."/>
            <person name="Dalin E."/>
            <person name="Tice H."/>
            <person name="Bruce D."/>
            <person name="Goodwin L."/>
            <person name="Pitluck S."/>
            <person name="Chertkov O."/>
            <person name="Brettin T."/>
            <person name="Detter J.C."/>
            <person name="Han C."/>
            <person name="Larimer F."/>
            <person name="Land M."/>
            <person name="Hauser L."/>
            <person name="Kyrpides N."/>
            <person name="Mikhailova N."/>
            <person name="Marx C."/>
            <person name="Richardson P."/>
        </authorList>
    </citation>
    <scope>NUCLEOTIDE SEQUENCE [LARGE SCALE GENOMIC DNA]</scope>
    <source>
        <strain>CM4 / NCIMB 13688</strain>
    </source>
</reference>
<dbReference type="EC" id="6.3.4.2" evidence="1"/>
<dbReference type="EMBL" id="CP001298">
    <property type="protein sequence ID" value="ACK85888.1"/>
    <property type="molecule type" value="Genomic_DNA"/>
</dbReference>
<dbReference type="RefSeq" id="WP_015824703.1">
    <property type="nucleotide sequence ID" value="NC_011757.1"/>
</dbReference>
<dbReference type="SMR" id="B7KUU9"/>
<dbReference type="MEROPS" id="C26.964"/>
<dbReference type="GeneID" id="72992392"/>
<dbReference type="KEGG" id="mch:Mchl_5124"/>
<dbReference type="HOGENOM" id="CLU_011675_5_0_5"/>
<dbReference type="UniPathway" id="UPA00159">
    <property type="reaction ID" value="UER00277"/>
</dbReference>
<dbReference type="Proteomes" id="UP000002385">
    <property type="component" value="Chromosome"/>
</dbReference>
<dbReference type="GO" id="GO:0005829">
    <property type="term" value="C:cytosol"/>
    <property type="evidence" value="ECO:0007669"/>
    <property type="project" value="TreeGrafter"/>
</dbReference>
<dbReference type="GO" id="GO:0005524">
    <property type="term" value="F:ATP binding"/>
    <property type="evidence" value="ECO:0007669"/>
    <property type="project" value="UniProtKB-KW"/>
</dbReference>
<dbReference type="GO" id="GO:0003883">
    <property type="term" value="F:CTP synthase activity"/>
    <property type="evidence" value="ECO:0007669"/>
    <property type="project" value="UniProtKB-UniRule"/>
</dbReference>
<dbReference type="GO" id="GO:0004359">
    <property type="term" value="F:glutaminase activity"/>
    <property type="evidence" value="ECO:0007669"/>
    <property type="project" value="RHEA"/>
</dbReference>
<dbReference type="GO" id="GO:0042802">
    <property type="term" value="F:identical protein binding"/>
    <property type="evidence" value="ECO:0007669"/>
    <property type="project" value="TreeGrafter"/>
</dbReference>
<dbReference type="GO" id="GO:0046872">
    <property type="term" value="F:metal ion binding"/>
    <property type="evidence" value="ECO:0007669"/>
    <property type="project" value="UniProtKB-KW"/>
</dbReference>
<dbReference type="GO" id="GO:0044210">
    <property type="term" value="P:'de novo' CTP biosynthetic process"/>
    <property type="evidence" value="ECO:0007669"/>
    <property type="project" value="UniProtKB-UniRule"/>
</dbReference>
<dbReference type="GO" id="GO:0019856">
    <property type="term" value="P:pyrimidine nucleobase biosynthetic process"/>
    <property type="evidence" value="ECO:0007669"/>
    <property type="project" value="TreeGrafter"/>
</dbReference>
<dbReference type="CDD" id="cd03113">
    <property type="entry name" value="CTPS_N"/>
    <property type="match status" value="1"/>
</dbReference>
<dbReference type="CDD" id="cd01746">
    <property type="entry name" value="GATase1_CTP_Synthase"/>
    <property type="match status" value="1"/>
</dbReference>
<dbReference type="FunFam" id="3.40.50.300:FF:000009">
    <property type="entry name" value="CTP synthase"/>
    <property type="match status" value="1"/>
</dbReference>
<dbReference type="FunFam" id="3.40.50.880:FF:000002">
    <property type="entry name" value="CTP synthase"/>
    <property type="match status" value="1"/>
</dbReference>
<dbReference type="Gene3D" id="3.40.50.880">
    <property type="match status" value="1"/>
</dbReference>
<dbReference type="Gene3D" id="3.40.50.300">
    <property type="entry name" value="P-loop containing nucleotide triphosphate hydrolases"/>
    <property type="match status" value="1"/>
</dbReference>
<dbReference type="HAMAP" id="MF_01227">
    <property type="entry name" value="PyrG"/>
    <property type="match status" value="1"/>
</dbReference>
<dbReference type="InterPro" id="IPR029062">
    <property type="entry name" value="Class_I_gatase-like"/>
</dbReference>
<dbReference type="InterPro" id="IPR004468">
    <property type="entry name" value="CTP_synthase"/>
</dbReference>
<dbReference type="InterPro" id="IPR017456">
    <property type="entry name" value="CTP_synthase_N"/>
</dbReference>
<dbReference type="InterPro" id="IPR017926">
    <property type="entry name" value="GATASE"/>
</dbReference>
<dbReference type="InterPro" id="IPR033828">
    <property type="entry name" value="GATase1_CTP_Synthase"/>
</dbReference>
<dbReference type="InterPro" id="IPR027417">
    <property type="entry name" value="P-loop_NTPase"/>
</dbReference>
<dbReference type="NCBIfam" id="NF003792">
    <property type="entry name" value="PRK05380.1"/>
    <property type="match status" value="1"/>
</dbReference>
<dbReference type="NCBIfam" id="TIGR00337">
    <property type="entry name" value="PyrG"/>
    <property type="match status" value="1"/>
</dbReference>
<dbReference type="PANTHER" id="PTHR11550">
    <property type="entry name" value="CTP SYNTHASE"/>
    <property type="match status" value="1"/>
</dbReference>
<dbReference type="PANTHER" id="PTHR11550:SF0">
    <property type="entry name" value="CTP SYNTHASE-RELATED"/>
    <property type="match status" value="1"/>
</dbReference>
<dbReference type="Pfam" id="PF06418">
    <property type="entry name" value="CTP_synth_N"/>
    <property type="match status" value="1"/>
</dbReference>
<dbReference type="Pfam" id="PF00117">
    <property type="entry name" value="GATase"/>
    <property type="match status" value="1"/>
</dbReference>
<dbReference type="SUPFAM" id="SSF52317">
    <property type="entry name" value="Class I glutamine amidotransferase-like"/>
    <property type="match status" value="1"/>
</dbReference>
<dbReference type="SUPFAM" id="SSF52540">
    <property type="entry name" value="P-loop containing nucleoside triphosphate hydrolases"/>
    <property type="match status" value="1"/>
</dbReference>
<dbReference type="PROSITE" id="PS51273">
    <property type="entry name" value="GATASE_TYPE_1"/>
    <property type="match status" value="1"/>
</dbReference>
<comment type="function">
    <text evidence="1">Catalyzes the ATP-dependent amination of UTP to CTP with either L-glutamine or ammonia as the source of nitrogen. Regulates intracellular CTP levels through interactions with the four ribonucleotide triphosphates.</text>
</comment>
<comment type="catalytic activity">
    <reaction evidence="1">
        <text>UTP + L-glutamine + ATP + H2O = CTP + L-glutamate + ADP + phosphate + 2 H(+)</text>
        <dbReference type="Rhea" id="RHEA:26426"/>
        <dbReference type="ChEBI" id="CHEBI:15377"/>
        <dbReference type="ChEBI" id="CHEBI:15378"/>
        <dbReference type="ChEBI" id="CHEBI:29985"/>
        <dbReference type="ChEBI" id="CHEBI:30616"/>
        <dbReference type="ChEBI" id="CHEBI:37563"/>
        <dbReference type="ChEBI" id="CHEBI:43474"/>
        <dbReference type="ChEBI" id="CHEBI:46398"/>
        <dbReference type="ChEBI" id="CHEBI:58359"/>
        <dbReference type="ChEBI" id="CHEBI:456216"/>
        <dbReference type="EC" id="6.3.4.2"/>
    </reaction>
</comment>
<comment type="catalytic activity">
    <reaction evidence="1">
        <text>L-glutamine + H2O = L-glutamate + NH4(+)</text>
        <dbReference type="Rhea" id="RHEA:15889"/>
        <dbReference type="ChEBI" id="CHEBI:15377"/>
        <dbReference type="ChEBI" id="CHEBI:28938"/>
        <dbReference type="ChEBI" id="CHEBI:29985"/>
        <dbReference type="ChEBI" id="CHEBI:58359"/>
    </reaction>
</comment>
<comment type="catalytic activity">
    <reaction evidence="1">
        <text>UTP + NH4(+) + ATP = CTP + ADP + phosphate + 2 H(+)</text>
        <dbReference type="Rhea" id="RHEA:16597"/>
        <dbReference type="ChEBI" id="CHEBI:15378"/>
        <dbReference type="ChEBI" id="CHEBI:28938"/>
        <dbReference type="ChEBI" id="CHEBI:30616"/>
        <dbReference type="ChEBI" id="CHEBI:37563"/>
        <dbReference type="ChEBI" id="CHEBI:43474"/>
        <dbReference type="ChEBI" id="CHEBI:46398"/>
        <dbReference type="ChEBI" id="CHEBI:456216"/>
    </reaction>
</comment>
<comment type="activity regulation">
    <text evidence="1">Allosterically activated by GTP, when glutamine is the substrate; GTP has no effect on the reaction when ammonia is the substrate. The allosteric effector GTP functions by stabilizing the protein conformation that binds the tetrahedral intermediate(s) formed during glutamine hydrolysis. Inhibited by the product CTP, via allosteric rather than competitive inhibition.</text>
</comment>
<comment type="pathway">
    <text evidence="1">Pyrimidine metabolism; CTP biosynthesis via de novo pathway; CTP from UDP: step 2/2.</text>
</comment>
<comment type="subunit">
    <text evidence="1">Homotetramer.</text>
</comment>
<comment type="miscellaneous">
    <text evidence="1">CTPSs have evolved a hybrid strategy for distinguishing between UTP and CTP. The overlapping regions of the product feedback inhibitory and substrate sites recognize a common feature in both compounds, the triphosphate moiety. To differentiate isosteric substrate and product pyrimidine rings, an additional pocket far from the expected kinase/ligase catalytic site, specifically recognizes the cytosine and ribose portions of the product inhibitor.</text>
</comment>
<comment type="similarity">
    <text evidence="1">Belongs to the CTP synthase family.</text>
</comment>
<accession>B7KUU9</accession>
<name>PYRG_METC4</name>